<feature type="initiator methionine" description="Removed" evidence="1">
    <location>
        <position position="1"/>
    </location>
</feature>
<feature type="chain" id="PRO_0000213316" description="Vacuolar protein sorting-associated protein 52 homolog">
    <location>
        <begin position="2"/>
        <end position="723"/>
    </location>
</feature>
<feature type="coiled-coil region" evidence="2">
    <location>
        <begin position="107"/>
        <end position="127"/>
    </location>
</feature>
<feature type="coiled-coil region" evidence="2">
    <location>
        <begin position="194"/>
        <end position="214"/>
    </location>
</feature>
<feature type="modified residue" description="N-acetylalanine" evidence="1">
    <location>
        <position position="2"/>
    </location>
</feature>
<feature type="modified residue" description="Phosphoserine" evidence="1">
    <location>
        <position position="355"/>
    </location>
</feature>
<feature type="splice variant" id="VSP_016234" description="In isoform 2." evidence="3">
    <location>
        <begin position="124"/>
        <end position="191"/>
    </location>
</feature>
<feature type="splice variant" id="VSP_016235" description="In isoform 2." evidence="3">
    <location>
        <begin position="681"/>
        <end position="715"/>
    </location>
</feature>
<feature type="sequence conflict" description="In Ref. 3; AAH63329." evidence="4" ref="3">
    <original>A</original>
    <variation>G</variation>
    <location>
        <position position="458"/>
    </location>
</feature>
<feature type="sequence conflict" description="In Ref. 1; BAC34741." evidence="4" ref="1">
    <original>N</original>
    <variation>K</variation>
    <location>
        <position position="722"/>
    </location>
</feature>
<comment type="function">
    <text evidence="1">Acts as a component of the GARP complex that is involved in retrograde transport from early and late endosomes to the trans-Golgi network (TGN). The GARP complex is required for the maintenance of the cycling of mannose 6-phosphate receptors between the TGN and endosomes, this cycling is necessary for proper lysosomal sorting of acid hydrolases such as CTSD. Acts as a component of the EARP complex that is involved in endocytic recycling. The EARP complex associates with Rab4-positive endosomes and promotes recycling of internalized transferrin receptor (TFRC) to the plasma membrane.</text>
</comment>
<comment type="subunit">
    <text evidence="1">Component of the Golgi-associated retrograde protein (GARP) complex, also called VFT (VPS fifty-three) complex, composed of VPS51, VPS52, VPS53 and VPS54. Component of the endosome-associated retrograde protein (EARP) complex, composed of VPS51, VPS52, VPS53 and VPS50/Syndetin. EIPR1 interacts with both EARP and GARP complexes and mediates the recruitment of the GARP complex to the trans-Golgi network. Interacts with RAB6A and STX10. Interacts with BLTP3B.</text>
</comment>
<comment type="subcellular location">
    <subcellularLocation>
        <location evidence="1">Golgi apparatus</location>
        <location evidence="1">trans-Golgi network membrane</location>
        <topology evidence="1">Peripheral membrane protein</topology>
    </subcellularLocation>
    <subcellularLocation>
        <location evidence="1">Endosome membrane</location>
        <topology evidence="1">Peripheral membrane protein</topology>
    </subcellularLocation>
    <subcellularLocation>
        <location evidence="1">Recycling endosome</location>
    </subcellularLocation>
    <text evidence="1">Localizes to the trans-Golgi network as part of the GARP complex, while it localizes to recycling endosomes as part of the EARP complex.</text>
</comment>
<comment type="alternative products">
    <event type="alternative splicing"/>
    <isoform>
        <id>Q8C754-1</id>
        <name>1</name>
        <sequence type="displayed"/>
    </isoform>
    <isoform>
        <id>Q8C754-2</id>
        <name>2</name>
        <sequence type="described" ref="VSP_016234 VSP_016235"/>
    </isoform>
</comment>
<comment type="similarity">
    <text evidence="4">Belongs to the VPS52 family.</text>
</comment>
<comment type="sequence caution" evidence="4">
    <conflict type="erroneous gene model prediction">
        <sequence resource="EMBL-CDS" id="AAC69899"/>
    </conflict>
</comment>
<comment type="sequence caution" evidence="4">
    <conflict type="erroneous gene model prediction">
        <sequence resource="EMBL-CDS" id="AAC97979"/>
    </conflict>
</comment>
<keyword id="KW-0007">Acetylation</keyword>
<keyword id="KW-0025">Alternative splicing</keyword>
<keyword id="KW-0175">Coiled coil</keyword>
<keyword id="KW-0967">Endosome</keyword>
<keyword id="KW-0333">Golgi apparatus</keyword>
<keyword id="KW-0472">Membrane</keyword>
<keyword id="KW-0597">Phosphoprotein</keyword>
<keyword id="KW-0653">Protein transport</keyword>
<keyword id="KW-1185">Reference proteome</keyword>
<keyword id="KW-0813">Transport</keyword>
<protein>
    <recommendedName>
        <fullName>Vacuolar protein sorting-associated protein 52 homolog</fullName>
    </recommendedName>
</protein>
<reference key="1">
    <citation type="journal article" date="2005" name="Science">
        <title>The transcriptional landscape of the mammalian genome.</title>
        <authorList>
            <person name="Carninci P."/>
            <person name="Kasukawa T."/>
            <person name="Katayama S."/>
            <person name="Gough J."/>
            <person name="Frith M.C."/>
            <person name="Maeda N."/>
            <person name="Oyama R."/>
            <person name="Ravasi T."/>
            <person name="Lenhard B."/>
            <person name="Wells C."/>
            <person name="Kodzius R."/>
            <person name="Shimokawa K."/>
            <person name="Bajic V.B."/>
            <person name="Brenner S.E."/>
            <person name="Batalov S."/>
            <person name="Forrest A.R."/>
            <person name="Zavolan M."/>
            <person name="Davis M.J."/>
            <person name="Wilming L.G."/>
            <person name="Aidinis V."/>
            <person name="Allen J.E."/>
            <person name="Ambesi-Impiombato A."/>
            <person name="Apweiler R."/>
            <person name="Aturaliya R.N."/>
            <person name="Bailey T.L."/>
            <person name="Bansal M."/>
            <person name="Baxter L."/>
            <person name="Beisel K.W."/>
            <person name="Bersano T."/>
            <person name="Bono H."/>
            <person name="Chalk A.M."/>
            <person name="Chiu K.P."/>
            <person name="Choudhary V."/>
            <person name="Christoffels A."/>
            <person name="Clutterbuck D.R."/>
            <person name="Crowe M.L."/>
            <person name="Dalla E."/>
            <person name="Dalrymple B.P."/>
            <person name="de Bono B."/>
            <person name="Della Gatta G."/>
            <person name="di Bernardo D."/>
            <person name="Down T."/>
            <person name="Engstrom P."/>
            <person name="Fagiolini M."/>
            <person name="Faulkner G."/>
            <person name="Fletcher C.F."/>
            <person name="Fukushima T."/>
            <person name="Furuno M."/>
            <person name="Futaki S."/>
            <person name="Gariboldi M."/>
            <person name="Georgii-Hemming P."/>
            <person name="Gingeras T.R."/>
            <person name="Gojobori T."/>
            <person name="Green R.E."/>
            <person name="Gustincich S."/>
            <person name="Harbers M."/>
            <person name="Hayashi Y."/>
            <person name="Hensch T.K."/>
            <person name="Hirokawa N."/>
            <person name="Hill D."/>
            <person name="Huminiecki L."/>
            <person name="Iacono M."/>
            <person name="Ikeo K."/>
            <person name="Iwama A."/>
            <person name="Ishikawa T."/>
            <person name="Jakt M."/>
            <person name="Kanapin A."/>
            <person name="Katoh M."/>
            <person name="Kawasawa Y."/>
            <person name="Kelso J."/>
            <person name="Kitamura H."/>
            <person name="Kitano H."/>
            <person name="Kollias G."/>
            <person name="Krishnan S.P."/>
            <person name="Kruger A."/>
            <person name="Kummerfeld S.K."/>
            <person name="Kurochkin I.V."/>
            <person name="Lareau L.F."/>
            <person name="Lazarevic D."/>
            <person name="Lipovich L."/>
            <person name="Liu J."/>
            <person name="Liuni S."/>
            <person name="McWilliam S."/>
            <person name="Madan Babu M."/>
            <person name="Madera M."/>
            <person name="Marchionni L."/>
            <person name="Matsuda H."/>
            <person name="Matsuzawa S."/>
            <person name="Miki H."/>
            <person name="Mignone F."/>
            <person name="Miyake S."/>
            <person name="Morris K."/>
            <person name="Mottagui-Tabar S."/>
            <person name="Mulder N."/>
            <person name="Nakano N."/>
            <person name="Nakauchi H."/>
            <person name="Ng P."/>
            <person name="Nilsson R."/>
            <person name="Nishiguchi S."/>
            <person name="Nishikawa S."/>
            <person name="Nori F."/>
            <person name="Ohara O."/>
            <person name="Okazaki Y."/>
            <person name="Orlando V."/>
            <person name="Pang K.C."/>
            <person name="Pavan W.J."/>
            <person name="Pavesi G."/>
            <person name="Pesole G."/>
            <person name="Petrovsky N."/>
            <person name="Piazza S."/>
            <person name="Reed J."/>
            <person name="Reid J.F."/>
            <person name="Ring B.Z."/>
            <person name="Ringwald M."/>
            <person name="Rost B."/>
            <person name="Ruan Y."/>
            <person name="Salzberg S.L."/>
            <person name="Sandelin A."/>
            <person name="Schneider C."/>
            <person name="Schoenbach C."/>
            <person name="Sekiguchi K."/>
            <person name="Semple C.A."/>
            <person name="Seno S."/>
            <person name="Sessa L."/>
            <person name="Sheng Y."/>
            <person name="Shibata Y."/>
            <person name="Shimada H."/>
            <person name="Shimada K."/>
            <person name="Silva D."/>
            <person name="Sinclair B."/>
            <person name="Sperling S."/>
            <person name="Stupka E."/>
            <person name="Sugiura K."/>
            <person name="Sultana R."/>
            <person name="Takenaka Y."/>
            <person name="Taki K."/>
            <person name="Tammoja K."/>
            <person name="Tan S.L."/>
            <person name="Tang S."/>
            <person name="Taylor M.S."/>
            <person name="Tegner J."/>
            <person name="Teichmann S.A."/>
            <person name="Ueda H.R."/>
            <person name="van Nimwegen E."/>
            <person name="Verardo R."/>
            <person name="Wei C.L."/>
            <person name="Yagi K."/>
            <person name="Yamanishi H."/>
            <person name="Zabarovsky E."/>
            <person name="Zhu S."/>
            <person name="Zimmer A."/>
            <person name="Hide W."/>
            <person name="Bult C."/>
            <person name="Grimmond S.M."/>
            <person name="Teasdale R.D."/>
            <person name="Liu E.T."/>
            <person name="Brusic V."/>
            <person name="Quackenbush J."/>
            <person name="Wahlestedt C."/>
            <person name="Mattick J.S."/>
            <person name="Hume D.A."/>
            <person name="Kai C."/>
            <person name="Sasaki D."/>
            <person name="Tomaru Y."/>
            <person name="Fukuda S."/>
            <person name="Kanamori-Katayama M."/>
            <person name="Suzuki M."/>
            <person name="Aoki J."/>
            <person name="Arakawa T."/>
            <person name="Iida J."/>
            <person name="Imamura K."/>
            <person name="Itoh M."/>
            <person name="Kato T."/>
            <person name="Kawaji H."/>
            <person name="Kawagashira N."/>
            <person name="Kawashima T."/>
            <person name="Kojima M."/>
            <person name="Kondo S."/>
            <person name="Konno H."/>
            <person name="Nakano K."/>
            <person name="Ninomiya N."/>
            <person name="Nishio T."/>
            <person name="Okada M."/>
            <person name="Plessy C."/>
            <person name="Shibata K."/>
            <person name="Shiraki T."/>
            <person name="Suzuki S."/>
            <person name="Tagami M."/>
            <person name="Waki K."/>
            <person name="Watahiki A."/>
            <person name="Okamura-Oho Y."/>
            <person name="Suzuki H."/>
            <person name="Kawai J."/>
            <person name="Hayashizaki Y."/>
        </authorList>
    </citation>
    <scope>NUCLEOTIDE SEQUENCE [LARGE SCALE MRNA] (ISOFORM 1)</scope>
    <source>
        <strain>C57BL/6J</strain>
        <tissue>Lung</tissue>
    </source>
</reference>
<reference key="2">
    <citation type="submission" date="1998-10" db="EMBL/GenBank/DDBJ databases">
        <title>Sequence of the mouse major histocomaptibility locus class II region.</title>
        <authorList>
            <person name="Rowen L."/>
            <person name="Qin S."/>
            <person name="Madan A."/>
            <person name="Loretz C."/>
            <person name="James R."/>
            <person name="Dors M."/>
            <person name="Mix L."/>
            <person name="Hall J."/>
            <person name="Lasky S."/>
            <person name="Hood L."/>
        </authorList>
    </citation>
    <scope>NUCLEOTIDE SEQUENCE [LARGE SCALE GENOMIC DNA]</scope>
    <source>
        <strain>129/SvJ</strain>
    </source>
</reference>
<reference key="3">
    <citation type="journal article" date="2004" name="Genome Res.">
        <title>The status, quality, and expansion of the NIH full-length cDNA project: the Mammalian Gene Collection (MGC).</title>
        <authorList>
            <consortium name="The MGC Project Team"/>
        </authorList>
    </citation>
    <scope>NUCLEOTIDE SEQUENCE [LARGE SCALE MRNA] (ISOFORM 2)</scope>
    <source>
        <tissue>Pituitary</tissue>
    </source>
</reference>
<reference key="4">
    <citation type="journal article" date="2010" name="Cell">
        <title>A tissue-specific atlas of mouse protein phosphorylation and expression.</title>
        <authorList>
            <person name="Huttlin E.L."/>
            <person name="Jedrychowski M.P."/>
            <person name="Elias J.E."/>
            <person name="Goswami T."/>
            <person name="Rad R."/>
            <person name="Beausoleil S.A."/>
            <person name="Villen J."/>
            <person name="Haas W."/>
            <person name="Sowa M.E."/>
            <person name="Gygi S.P."/>
        </authorList>
    </citation>
    <scope>IDENTIFICATION BY MASS SPECTROMETRY [LARGE SCALE ANALYSIS]</scope>
    <source>
        <tissue>Brain</tissue>
        <tissue>Lung</tissue>
        <tissue>Pancreas</tissue>
        <tissue>Spleen</tissue>
        <tissue>Testis</tissue>
    </source>
</reference>
<dbReference type="EMBL" id="AK051732">
    <property type="protein sequence ID" value="BAC34741.1"/>
    <property type="molecule type" value="mRNA"/>
</dbReference>
<dbReference type="EMBL" id="AK052523">
    <property type="protein sequence ID" value="BAC35024.1"/>
    <property type="molecule type" value="mRNA"/>
</dbReference>
<dbReference type="EMBL" id="AF100956">
    <property type="protein sequence ID" value="AAC69899.1"/>
    <property type="status" value="ALT_SEQ"/>
    <property type="molecule type" value="Genomic_DNA"/>
</dbReference>
<dbReference type="EMBL" id="AF110520">
    <property type="protein sequence ID" value="AAC97979.1"/>
    <property type="status" value="ALT_SEQ"/>
    <property type="molecule type" value="Genomic_DNA"/>
</dbReference>
<dbReference type="EMBL" id="BC063329">
    <property type="protein sequence ID" value="AAH63329.1"/>
    <property type="molecule type" value="mRNA"/>
</dbReference>
<dbReference type="CCDS" id="CCDS37574.1">
    <molecule id="Q8C754-1"/>
</dbReference>
<dbReference type="RefSeq" id="NP_766208.2">
    <molecule id="Q8C754-1"/>
    <property type="nucleotide sequence ID" value="NM_172620.4"/>
</dbReference>
<dbReference type="BioGRID" id="230307">
    <property type="interactions" value="9"/>
</dbReference>
<dbReference type="FunCoup" id="Q8C754">
    <property type="interactions" value="3812"/>
</dbReference>
<dbReference type="STRING" id="10090.ENSMUSP00000025178"/>
<dbReference type="GlyGen" id="Q8C754">
    <property type="glycosylation" value="1 site, 1 O-linked glycan (1 site)"/>
</dbReference>
<dbReference type="iPTMnet" id="Q8C754"/>
<dbReference type="PhosphoSitePlus" id="Q8C754"/>
<dbReference type="PaxDb" id="10090-ENSMUSP00000025178"/>
<dbReference type="PeptideAtlas" id="Q8C754"/>
<dbReference type="ProteomicsDB" id="297823">
    <molecule id="Q8C754-1"/>
</dbReference>
<dbReference type="ProteomicsDB" id="297824">
    <molecule id="Q8C754-2"/>
</dbReference>
<dbReference type="Pumba" id="Q8C754"/>
<dbReference type="Antibodypedia" id="28991">
    <property type="antibodies" value="130 antibodies from 21 providers"/>
</dbReference>
<dbReference type="DNASU" id="224705"/>
<dbReference type="Ensembl" id="ENSMUST00000025178.17">
    <molecule id="Q8C754-1"/>
    <property type="protein sequence ID" value="ENSMUSP00000025178.10"/>
    <property type="gene ID" value="ENSMUSG00000024319.19"/>
</dbReference>
<dbReference type="GeneID" id="224705"/>
<dbReference type="KEGG" id="mmu:224705"/>
<dbReference type="UCSC" id="uc008cam.1">
    <molecule id="Q8C754-1"/>
    <property type="organism name" value="mouse"/>
</dbReference>
<dbReference type="AGR" id="MGI:1330304"/>
<dbReference type="CTD" id="6293"/>
<dbReference type="MGI" id="MGI:1330304">
    <property type="gene designation" value="Vps52"/>
</dbReference>
<dbReference type="VEuPathDB" id="HostDB:ENSMUSG00000024319"/>
<dbReference type="eggNOG" id="KOG1961">
    <property type="taxonomic scope" value="Eukaryota"/>
</dbReference>
<dbReference type="GeneTree" id="ENSGT00390000008815"/>
<dbReference type="HOGENOM" id="CLU_010797_0_0_1"/>
<dbReference type="InParanoid" id="Q8C754"/>
<dbReference type="OMA" id="IHVVMVE"/>
<dbReference type="OrthoDB" id="19482at2759"/>
<dbReference type="PhylomeDB" id="Q8C754"/>
<dbReference type="TreeFam" id="TF314937"/>
<dbReference type="Reactome" id="R-MMU-6811440">
    <property type="pathway name" value="Retrograde transport at the Trans-Golgi-Network"/>
</dbReference>
<dbReference type="BioGRID-ORCS" id="224705">
    <property type="hits" value="22 hits in 78 CRISPR screens"/>
</dbReference>
<dbReference type="CD-CODE" id="CE726F99">
    <property type="entry name" value="Postsynaptic density"/>
</dbReference>
<dbReference type="ChiTaRS" id="Vps52">
    <property type="organism name" value="mouse"/>
</dbReference>
<dbReference type="PRO" id="PR:Q8C754"/>
<dbReference type="Proteomes" id="UP000000589">
    <property type="component" value="Chromosome 17"/>
</dbReference>
<dbReference type="RNAct" id="Q8C754">
    <property type="molecule type" value="protein"/>
</dbReference>
<dbReference type="Bgee" id="ENSMUSG00000024319">
    <property type="expression patterns" value="Expressed in granulocyte and 203 other cell types or tissues"/>
</dbReference>
<dbReference type="ExpressionAtlas" id="Q8C754">
    <property type="expression patterns" value="baseline and differential"/>
</dbReference>
<dbReference type="GO" id="GO:0005829">
    <property type="term" value="C:cytosol"/>
    <property type="evidence" value="ECO:0007669"/>
    <property type="project" value="GOC"/>
</dbReference>
<dbReference type="GO" id="GO:1990745">
    <property type="term" value="C:EARP complex"/>
    <property type="evidence" value="ECO:0000250"/>
    <property type="project" value="UniProtKB"/>
</dbReference>
<dbReference type="GO" id="GO:0010008">
    <property type="term" value="C:endosome membrane"/>
    <property type="evidence" value="ECO:0007669"/>
    <property type="project" value="UniProtKB-SubCell"/>
</dbReference>
<dbReference type="GO" id="GO:0000938">
    <property type="term" value="C:GARP complex"/>
    <property type="evidence" value="ECO:0000266"/>
    <property type="project" value="MGI"/>
</dbReference>
<dbReference type="GO" id="GO:0016020">
    <property type="term" value="C:membrane"/>
    <property type="evidence" value="ECO:0000266"/>
    <property type="project" value="MGI"/>
</dbReference>
<dbReference type="GO" id="GO:0048471">
    <property type="term" value="C:perinuclear region of cytoplasm"/>
    <property type="evidence" value="ECO:0007669"/>
    <property type="project" value="Ensembl"/>
</dbReference>
<dbReference type="GO" id="GO:0098794">
    <property type="term" value="C:postsynapse"/>
    <property type="evidence" value="ECO:0000314"/>
    <property type="project" value="SynGO"/>
</dbReference>
<dbReference type="GO" id="GO:0098793">
    <property type="term" value="C:presynapse"/>
    <property type="evidence" value="ECO:0000314"/>
    <property type="project" value="SynGO"/>
</dbReference>
<dbReference type="GO" id="GO:0055037">
    <property type="term" value="C:recycling endosome"/>
    <property type="evidence" value="ECO:0000250"/>
    <property type="project" value="UniProtKB"/>
</dbReference>
<dbReference type="GO" id="GO:0019905">
    <property type="term" value="F:syntaxin binding"/>
    <property type="evidence" value="ECO:0007669"/>
    <property type="project" value="Ensembl"/>
</dbReference>
<dbReference type="GO" id="GO:0010668">
    <property type="term" value="P:ectodermal cell differentiation"/>
    <property type="evidence" value="ECO:0000315"/>
    <property type="project" value="MGI"/>
</dbReference>
<dbReference type="GO" id="GO:0048611">
    <property type="term" value="P:embryonic ectodermal digestive tract development"/>
    <property type="evidence" value="ECO:0000315"/>
    <property type="project" value="MGI"/>
</dbReference>
<dbReference type="GO" id="GO:0032456">
    <property type="term" value="P:endocytic recycling"/>
    <property type="evidence" value="ECO:0000250"/>
    <property type="project" value="UniProtKB"/>
</dbReference>
<dbReference type="GO" id="GO:0007041">
    <property type="term" value="P:lysosomal transport"/>
    <property type="evidence" value="ECO:0000266"/>
    <property type="project" value="MGI"/>
</dbReference>
<dbReference type="GO" id="GO:0006605">
    <property type="term" value="P:protein targeting"/>
    <property type="evidence" value="ECO:0000315"/>
    <property type="project" value="MGI"/>
</dbReference>
<dbReference type="GO" id="GO:0015031">
    <property type="term" value="P:protein transport"/>
    <property type="evidence" value="ECO:0007669"/>
    <property type="project" value="UniProtKB-KW"/>
</dbReference>
<dbReference type="GO" id="GO:0090119">
    <property type="term" value="P:vesicle-mediated cholesterol transport"/>
    <property type="evidence" value="ECO:0000315"/>
    <property type="project" value="MGI"/>
</dbReference>
<dbReference type="InterPro" id="IPR007258">
    <property type="entry name" value="Vps52"/>
</dbReference>
<dbReference type="InterPro" id="IPR048361">
    <property type="entry name" value="Vps52_C"/>
</dbReference>
<dbReference type="InterPro" id="IPR048319">
    <property type="entry name" value="Vps52_CC"/>
</dbReference>
<dbReference type="PANTHER" id="PTHR14190">
    <property type="entry name" value="SUPPRESSOR OF ACTIN MUTATIONS 2/VACUOLAR PROTEIN SORTING 52"/>
    <property type="match status" value="1"/>
</dbReference>
<dbReference type="PANTHER" id="PTHR14190:SF7">
    <property type="entry name" value="VACUOLAR PROTEIN SORTING-ASSOCIATED PROTEIN 52 HOMOLOG"/>
    <property type="match status" value="1"/>
</dbReference>
<dbReference type="Pfam" id="PF20655">
    <property type="entry name" value="Vps52_C"/>
    <property type="match status" value="1"/>
</dbReference>
<dbReference type="Pfam" id="PF04129">
    <property type="entry name" value="Vps52_CC"/>
    <property type="match status" value="1"/>
</dbReference>
<evidence type="ECO:0000250" key="1">
    <source>
        <dbReference type="UniProtKB" id="Q8N1B4"/>
    </source>
</evidence>
<evidence type="ECO:0000255" key="2"/>
<evidence type="ECO:0000303" key="3">
    <source>
    </source>
</evidence>
<evidence type="ECO:0000305" key="4"/>
<gene>
    <name type="primary">Vps52</name>
</gene>
<proteinExistence type="evidence at protein level"/>
<accession>Q8C754</accession>
<accession>Q6P4N7</accession>
<accession>Q8BQ15</accession>
<accession>Q9QWT6</accession>
<accession>Q9QWV2</accession>
<sequence>MAAAATMAAAARELVLRAGASDVEEEEGPLGGGSGLQEPLQLGELDITSDEFILDEVDVHIQANLEDELVKEALKTGVDLRHYSKQVELELQQIEQKSIRDYIQESENIASLHNQITACDAVLERMEQMLGAFQSDLSSISSEIRTLQEQSGAMNIRLRNRQAVRGKLGELVDGLVVPSALVTAILEAPVTEPRFLEQLQELDAKAAAVREQEAMGTAACADVRGVLDRLRVKAVTKIREFILQKIYSFRKPMTNYQIPQAALLKYRFFYQFLLGNERATAKEIRDEYVETLSKIYLSYYRSYVGRLMKVQYEEVAEKDDLMGVEDTAKKGFFSKPSLRSRNTIFTLGTRGTVISPAELEAPILVPHTAQRGEQRYPFEALFRSQHYALLDNSCREYLFICEFFIVSGPAAHDLFHAVMGRTLSMTLKHLESYLADCYDAIAVFLCIHIVLRFRNIAAKRDVPALDRYWEQVLALLWPRFELILEMNVQSVRSTDPQRLGGLDTRPHYITRRYAEFSSALVSINQTIPNERTLQLLGQLQVEVENFVLRVAAEFSSRKEQLVFLINNYDMMLGVLMERAADDSKEVESFQQLLNARTQEFIEELLSPPFGGLVAFVKEAEALIERGQAERLRGEEARVTQLIRGFGSSWKASVESLSQDVMRSFTNFRNGTSIIQGALTQLIQLYHRFHRVLSQPQLRALPARAELINIHHLMVELKKHKPNF</sequence>
<organism>
    <name type="scientific">Mus musculus</name>
    <name type="common">Mouse</name>
    <dbReference type="NCBI Taxonomy" id="10090"/>
    <lineage>
        <taxon>Eukaryota</taxon>
        <taxon>Metazoa</taxon>
        <taxon>Chordata</taxon>
        <taxon>Craniata</taxon>
        <taxon>Vertebrata</taxon>
        <taxon>Euteleostomi</taxon>
        <taxon>Mammalia</taxon>
        <taxon>Eutheria</taxon>
        <taxon>Euarchontoglires</taxon>
        <taxon>Glires</taxon>
        <taxon>Rodentia</taxon>
        <taxon>Myomorpha</taxon>
        <taxon>Muroidea</taxon>
        <taxon>Muridae</taxon>
        <taxon>Murinae</taxon>
        <taxon>Mus</taxon>
        <taxon>Mus</taxon>
    </lineage>
</organism>
<name>VPS52_MOUSE</name>